<protein>
    <recommendedName>
        <fullName>Ras-related protein RABD2c</fullName>
        <shortName>AtRABD2c</shortName>
    </recommendedName>
    <alternativeName>
        <fullName>Ras-related protein Rab1C</fullName>
        <shortName>AtRab1C</shortName>
    </alternativeName>
</protein>
<proteinExistence type="evidence at protein level"/>
<keyword id="KW-1003">Cell membrane</keyword>
<keyword id="KW-0931">ER-Golgi transport</keyword>
<keyword id="KW-0333">Golgi apparatus</keyword>
<keyword id="KW-0342">GTP-binding</keyword>
<keyword id="KW-0449">Lipoprotein</keyword>
<keyword id="KW-0472">Membrane</keyword>
<keyword id="KW-0547">Nucleotide-binding</keyword>
<keyword id="KW-0636">Prenylation</keyword>
<keyword id="KW-0653">Protein transport</keyword>
<keyword id="KW-1185">Reference proteome</keyword>
<keyword id="KW-0813">Transport</keyword>
<comment type="function">
    <text evidence="1">Protein transport. Regulator of membrane traffic from the Golgi apparatus towards the endoplasmic reticulum (ER) (By similarity).</text>
</comment>
<comment type="subcellular location">
    <subcellularLocation>
        <location evidence="4">Cell membrane</location>
    </subcellularLocation>
    <subcellularLocation>
        <location>Golgi apparatus</location>
        <location>trans-Golgi network membrane</location>
    </subcellularLocation>
    <subcellularLocation>
        <location evidence="5">Golgi apparatus membrane</location>
        <topology evidence="5">Lipid-anchor</topology>
    </subcellularLocation>
</comment>
<comment type="similarity">
    <text evidence="5">Belongs to the small GTPase superfamily. Rab family.</text>
</comment>
<comment type="sequence caution" evidence="5">
    <conflict type="erroneous gene model prediction">
        <sequence resource="EMBL-CDS" id="CAB10533"/>
    </conflict>
</comment>
<name>RAD2C_ARATH</name>
<feature type="chain" id="PRO_0000407331" description="Ras-related protein RABD2c">
    <location>
        <begin position="1"/>
        <end position="202"/>
    </location>
</feature>
<feature type="region of interest" description="Disordered" evidence="3">
    <location>
        <begin position="174"/>
        <end position="202"/>
    </location>
</feature>
<feature type="short sequence motif" description="Effector region" evidence="1">
    <location>
        <begin position="37"/>
        <end position="45"/>
    </location>
</feature>
<feature type="compositionally biased region" description="Polar residues" evidence="3">
    <location>
        <begin position="192"/>
        <end position="202"/>
    </location>
</feature>
<feature type="binding site" evidence="2">
    <location>
        <begin position="15"/>
        <end position="23"/>
    </location>
    <ligand>
        <name>GTP</name>
        <dbReference type="ChEBI" id="CHEBI:37565"/>
    </ligand>
</feature>
<feature type="binding site" evidence="2">
    <location>
        <begin position="33"/>
        <end position="40"/>
    </location>
    <ligand>
        <name>GTP</name>
        <dbReference type="ChEBI" id="CHEBI:37565"/>
    </ligand>
</feature>
<feature type="binding site" evidence="2">
    <location>
        <begin position="63"/>
        <end position="67"/>
    </location>
    <ligand>
        <name>GTP</name>
        <dbReference type="ChEBI" id="CHEBI:37565"/>
    </ligand>
</feature>
<feature type="binding site" evidence="2">
    <location>
        <begin position="121"/>
        <end position="124"/>
    </location>
    <ligand>
        <name>GTP</name>
        <dbReference type="ChEBI" id="CHEBI:37565"/>
    </ligand>
</feature>
<feature type="binding site" evidence="2">
    <location>
        <begin position="151"/>
        <end position="153"/>
    </location>
    <ligand>
        <name>GTP</name>
        <dbReference type="ChEBI" id="CHEBI:37565"/>
    </ligand>
</feature>
<feature type="lipid moiety-binding region" description="S-geranylgeranyl cysteine" evidence="1">
    <location>
        <position position="199"/>
    </location>
</feature>
<feature type="lipid moiety-binding region" description="S-geranylgeranyl cysteine" evidence="1">
    <location>
        <position position="200"/>
    </location>
</feature>
<feature type="sequence conflict" description="In Ref. 4; AAL31108." evidence="5" ref="4">
    <original>C</original>
    <variation>A</variation>
    <location>
        <position position="200"/>
    </location>
</feature>
<sequence length="202" mass="22318">MNPEYDYLFKLLLIGDSGVGKSCLLLRFADDSYLDSYISTIGVDFKIRTVEQDGKTIKLQIWDTAGQERFRTITSSYYRGAHGIIVTYDVTDLESFNNVKQWLNEIDRYASENVNKLLVGNKCDLTSQKVVSTETAKAFADELGIPFLETSAKNATNVEEAFMAMTAAIKTRMASQPAGGSKPPTVQIRGQPVNQQSGCCSS</sequence>
<accession>Q9SEH3</accession>
<accession>O23594</accession>
<accession>Q8W4S8</accession>
<gene>
    <name type="primary">RABD2C</name>
    <name type="synonym">RAB1C</name>
    <name type="ordered locus">At4g17530</name>
    <name type="ORF">dl4800c</name>
    <name type="ORF">FCAALL.87</name>
</gene>
<evidence type="ECO:0000250" key="1"/>
<evidence type="ECO:0000250" key="2">
    <source>
        <dbReference type="UniProtKB" id="P62820"/>
    </source>
</evidence>
<evidence type="ECO:0000256" key="3">
    <source>
        <dbReference type="SAM" id="MobiDB-lite"/>
    </source>
</evidence>
<evidence type="ECO:0000269" key="4">
    <source>
    </source>
</evidence>
<evidence type="ECO:0000305" key="5"/>
<organism>
    <name type="scientific">Arabidopsis thaliana</name>
    <name type="common">Mouse-ear cress</name>
    <dbReference type="NCBI Taxonomy" id="3702"/>
    <lineage>
        <taxon>Eukaryota</taxon>
        <taxon>Viridiplantae</taxon>
        <taxon>Streptophyta</taxon>
        <taxon>Embryophyta</taxon>
        <taxon>Tracheophyta</taxon>
        <taxon>Spermatophyta</taxon>
        <taxon>Magnoliopsida</taxon>
        <taxon>eudicotyledons</taxon>
        <taxon>Gunneridae</taxon>
        <taxon>Pentapetalae</taxon>
        <taxon>rosids</taxon>
        <taxon>malvids</taxon>
        <taxon>Brassicales</taxon>
        <taxon>Brassicaceae</taxon>
        <taxon>Camelineae</taxon>
        <taxon>Arabidopsis</taxon>
    </lineage>
</organism>
<dbReference type="EMBL" id="Z97343">
    <property type="protein sequence ID" value="CAB10533.1"/>
    <property type="status" value="ALT_SEQ"/>
    <property type="molecule type" value="Genomic_DNA"/>
</dbReference>
<dbReference type="EMBL" id="AL161546">
    <property type="protein sequence ID" value="CAB78756.1"/>
    <property type="molecule type" value="Genomic_DNA"/>
</dbReference>
<dbReference type="EMBL" id="CP002687">
    <property type="protein sequence ID" value="AEE83907.1"/>
    <property type="molecule type" value="Genomic_DNA"/>
</dbReference>
<dbReference type="EMBL" id="AF127134">
    <property type="protein sequence ID" value="AAF22133.1"/>
    <property type="molecule type" value="mRNA"/>
</dbReference>
<dbReference type="EMBL" id="AY052204">
    <property type="protein sequence ID" value="AAK97675.1"/>
    <property type="molecule type" value="mRNA"/>
</dbReference>
<dbReference type="EMBL" id="AY060495">
    <property type="protein sequence ID" value="AAL31108.1"/>
    <property type="molecule type" value="mRNA"/>
</dbReference>
<dbReference type="EMBL" id="AK227290">
    <property type="protein sequence ID" value="BAE99310.1"/>
    <property type="molecule type" value="mRNA"/>
</dbReference>
<dbReference type="PIR" id="H71444">
    <property type="entry name" value="H71444"/>
</dbReference>
<dbReference type="RefSeq" id="NP_193486.1">
    <property type="nucleotide sequence ID" value="NM_117859.4"/>
</dbReference>
<dbReference type="SMR" id="Q9SEH3"/>
<dbReference type="BioGRID" id="12761">
    <property type="interactions" value="2"/>
</dbReference>
<dbReference type="FunCoup" id="Q9SEH3">
    <property type="interactions" value="3975"/>
</dbReference>
<dbReference type="IntAct" id="Q9SEH3">
    <property type="interactions" value="1"/>
</dbReference>
<dbReference type="MINT" id="Q9SEH3"/>
<dbReference type="STRING" id="3702.Q9SEH3"/>
<dbReference type="iPTMnet" id="Q9SEH3"/>
<dbReference type="PaxDb" id="3702-AT4G17530.1"/>
<dbReference type="ProteomicsDB" id="236702"/>
<dbReference type="EnsemblPlants" id="AT4G17530.1">
    <property type="protein sequence ID" value="AT4G17530.1"/>
    <property type="gene ID" value="AT4G17530"/>
</dbReference>
<dbReference type="GeneID" id="827468"/>
<dbReference type="Gramene" id="AT4G17530.1">
    <property type="protein sequence ID" value="AT4G17530.1"/>
    <property type="gene ID" value="AT4G17530"/>
</dbReference>
<dbReference type="KEGG" id="ath:AT4G17530"/>
<dbReference type="Araport" id="AT4G17530"/>
<dbReference type="TAIR" id="AT4G17530">
    <property type="gene designation" value="RAB1C"/>
</dbReference>
<dbReference type="eggNOG" id="KOG0084">
    <property type="taxonomic scope" value="Eukaryota"/>
</dbReference>
<dbReference type="HOGENOM" id="CLU_041217_23_1_1"/>
<dbReference type="InParanoid" id="Q9SEH3"/>
<dbReference type="OMA" id="TQMAKDF"/>
<dbReference type="OrthoDB" id="1037288at2759"/>
<dbReference type="PhylomeDB" id="Q9SEH3"/>
<dbReference type="PRO" id="PR:Q9SEH3"/>
<dbReference type="Proteomes" id="UP000006548">
    <property type="component" value="Chromosome 4"/>
</dbReference>
<dbReference type="ExpressionAtlas" id="Q9SEH3">
    <property type="expression patterns" value="baseline and differential"/>
</dbReference>
<dbReference type="GO" id="GO:0005829">
    <property type="term" value="C:cytosol"/>
    <property type="evidence" value="ECO:0007005"/>
    <property type="project" value="TAIR"/>
</dbReference>
<dbReference type="GO" id="GO:0005794">
    <property type="term" value="C:Golgi apparatus"/>
    <property type="evidence" value="ECO:0000314"/>
    <property type="project" value="TAIR"/>
</dbReference>
<dbReference type="GO" id="GO:0000139">
    <property type="term" value="C:Golgi membrane"/>
    <property type="evidence" value="ECO:0007669"/>
    <property type="project" value="UniProtKB-SubCell"/>
</dbReference>
<dbReference type="GO" id="GO:0000325">
    <property type="term" value="C:plant-type vacuole"/>
    <property type="evidence" value="ECO:0007005"/>
    <property type="project" value="TAIR"/>
</dbReference>
<dbReference type="GO" id="GO:0005886">
    <property type="term" value="C:plasma membrane"/>
    <property type="evidence" value="ECO:0007005"/>
    <property type="project" value="TAIR"/>
</dbReference>
<dbReference type="GO" id="GO:0009506">
    <property type="term" value="C:plasmodesma"/>
    <property type="evidence" value="ECO:0007005"/>
    <property type="project" value="TAIR"/>
</dbReference>
<dbReference type="GO" id="GO:0005525">
    <property type="term" value="F:GTP binding"/>
    <property type="evidence" value="ECO:0007669"/>
    <property type="project" value="UniProtKB-KW"/>
</dbReference>
<dbReference type="GO" id="GO:0003924">
    <property type="term" value="F:GTPase activity"/>
    <property type="evidence" value="ECO:0007669"/>
    <property type="project" value="InterPro"/>
</dbReference>
<dbReference type="GO" id="GO:0009555">
    <property type="term" value="P:pollen development"/>
    <property type="evidence" value="ECO:0000315"/>
    <property type="project" value="TAIR"/>
</dbReference>
<dbReference type="GO" id="GO:0009860">
    <property type="term" value="P:pollen tube growth"/>
    <property type="evidence" value="ECO:0000316"/>
    <property type="project" value="TAIR"/>
</dbReference>
<dbReference type="GO" id="GO:0015031">
    <property type="term" value="P:protein transport"/>
    <property type="evidence" value="ECO:0007669"/>
    <property type="project" value="UniProtKB-KW"/>
</dbReference>
<dbReference type="GO" id="GO:0016192">
    <property type="term" value="P:vesicle-mediated transport"/>
    <property type="evidence" value="ECO:0007669"/>
    <property type="project" value="UniProtKB-KW"/>
</dbReference>
<dbReference type="CDD" id="cd01869">
    <property type="entry name" value="Rab1_Ypt1"/>
    <property type="match status" value="1"/>
</dbReference>
<dbReference type="FunFam" id="3.40.50.300:FF:000359">
    <property type="entry name" value="Small GTP-binding protein"/>
    <property type="match status" value="1"/>
</dbReference>
<dbReference type="Gene3D" id="3.40.50.300">
    <property type="entry name" value="P-loop containing nucleotide triphosphate hydrolases"/>
    <property type="match status" value="1"/>
</dbReference>
<dbReference type="InterPro" id="IPR027417">
    <property type="entry name" value="P-loop_NTPase"/>
</dbReference>
<dbReference type="InterPro" id="IPR050227">
    <property type="entry name" value="Rab"/>
</dbReference>
<dbReference type="InterPro" id="IPR005225">
    <property type="entry name" value="Small_GTP-bd"/>
</dbReference>
<dbReference type="InterPro" id="IPR001806">
    <property type="entry name" value="Small_GTPase"/>
</dbReference>
<dbReference type="NCBIfam" id="TIGR00231">
    <property type="entry name" value="small_GTP"/>
    <property type="match status" value="1"/>
</dbReference>
<dbReference type="PANTHER" id="PTHR47977">
    <property type="entry name" value="RAS-RELATED PROTEIN RAB"/>
    <property type="match status" value="1"/>
</dbReference>
<dbReference type="Pfam" id="PF00071">
    <property type="entry name" value="Ras"/>
    <property type="match status" value="1"/>
</dbReference>
<dbReference type="PRINTS" id="PR00449">
    <property type="entry name" value="RASTRNSFRMNG"/>
</dbReference>
<dbReference type="SMART" id="SM00175">
    <property type="entry name" value="RAB"/>
    <property type="match status" value="1"/>
</dbReference>
<dbReference type="SMART" id="SM00176">
    <property type="entry name" value="RAN"/>
    <property type="match status" value="1"/>
</dbReference>
<dbReference type="SMART" id="SM00173">
    <property type="entry name" value="RAS"/>
    <property type="match status" value="1"/>
</dbReference>
<dbReference type="SMART" id="SM00174">
    <property type="entry name" value="RHO"/>
    <property type="match status" value="1"/>
</dbReference>
<dbReference type="SUPFAM" id="SSF52540">
    <property type="entry name" value="P-loop containing nucleoside triphosphate hydrolases"/>
    <property type="match status" value="1"/>
</dbReference>
<dbReference type="PROSITE" id="PS51419">
    <property type="entry name" value="RAB"/>
    <property type="match status" value="1"/>
</dbReference>
<reference key="1">
    <citation type="journal article" date="1998" name="Nature">
        <title>Analysis of 1.9 Mb of contiguous sequence from chromosome 4 of Arabidopsis thaliana.</title>
        <authorList>
            <person name="Bevan M."/>
            <person name="Bancroft I."/>
            <person name="Bent E."/>
            <person name="Love K."/>
            <person name="Goodman H.M."/>
            <person name="Dean C."/>
            <person name="Bergkamp R."/>
            <person name="Dirkse W."/>
            <person name="van Staveren M."/>
            <person name="Stiekema W."/>
            <person name="Drost L."/>
            <person name="Ridley P."/>
            <person name="Hudson S.-A."/>
            <person name="Patel K."/>
            <person name="Murphy G."/>
            <person name="Piffanelli P."/>
            <person name="Wedler H."/>
            <person name="Wedler E."/>
            <person name="Wambutt R."/>
            <person name="Weitzenegger T."/>
            <person name="Pohl T."/>
            <person name="Terryn N."/>
            <person name="Gielen J."/>
            <person name="Villarroel R."/>
            <person name="De Clercq R."/>
            <person name="van Montagu M."/>
            <person name="Lecharny A."/>
            <person name="Aubourg S."/>
            <person name="Gy I."/>
            <person name="Kreis M."/>
            <person name="Lao N."/>
            <person name="Kavanagh T."/>
            <person name="Hempel S."/>
            <person name="Kotter P."/>
            <person name="Entian K.-D."/>
            <person name="Rieger M."/>
            <person name="Schaefer M."/>
            <person name="Funk B."/>
            <person name="Mueller-Auer S."/>
            <person name="Silvey M."/>
            <person name="James R."/>
            <person name="Monfort A."/>
            <person name="Pons A."/>
            <person name="Puigdomenech P."/>
            <person name="Douka A."/>
            <person name="Voukelatou E."/>
            <person name="Milioni D."/>
            <person name="Hatzopoulos P."/>
            <person name="Piravandi E."/>
            <person name="Obermaier B."/>
            <person name="Hilbert H."/>
            <person name="Duesterhoeft A."/>
            <person name="Moores T."/>
            <person name="Jones J.D.G."/>
            <person name="Eneva T."/>
            <person name="Palme K."/>
            <person name="Benes V."/>
            <person name="Rechmann S."/>
            <person name="Ansorge W."/>
            <person name="Cooke R."/>
            <person name="Berger C."/>
            <person name="Delseny M."/>
            <person name="Voet M."/>
            <person name="Volckaert G."/>
            <person name="Mewes H.-W."/>
            <person name="Klosterman S."/>
            <person name="Schueller C."/>
            <person name="Chalwatzis N."/>
        </authorList>
    </citation>
    <scope>NUCLEOTIDE SEQUENCE [LARGE SCALE GENOMIC DNA]</scope>
    <source>
        <strain>cv. Columbia</strain>
    </source>
</reference>
<reference key="2">
    <citation type="journal article" date="1999" name="Nature">
        <title>Sequence and analysis of chromosome 4 of the plant Arabidopsis thaliana.</title>
        <authorList>
            <person name="Mayer K.F.X."/>
            <person name="Schueller C."/>
            <person name="Wambutt R."/>
            <person name="Murphy G."/>
            <person name="Volckaert G."/>
            <person name="Pohl T."/>
            <person name="Duesterhoeft A."/>
            <person name="Stiekema W."/>
            <person name="Entian K.-D."/>
            <person name="Terryn N."/>
            <person name="Harris B."/>
            <person name="Ansorge W."/>
            <person name="Brandt P."/>
            <person name="Grivell L.A."/>
            <person name="Rieger M."/>
            <person name="Weichselgartner M."/>
            <person name="de Simone V."/>
            <person name="Obermaier B."/>
            <person name="Mache R."/>
            <person name="Mueller M."/>
            <person name="Kreis M."/>
            <person name="Delseny M."/>
            <person name="Puigdomenech P."/>
            <person name="Watson M."/>
            <person name="Schmidtheini T."/>
            <person name="Reichert B."/>
            <person name="Portetelle D."/>
            <person name="Perez-Alonso M."/>
            <person name="Boutry M."/>
            <person name="Bancroft I."/>
            <person name="Vos P."/>
            <person name="Hoheisel J."/>
            <person name="Zimmermann W."/>
            <person name="Wedler H."/>
            <person name="Ridley P."/>
            <person name="Langham S.-A."/>
            <person name="McCullagh B."/>
            <person name="Bilham L."/>
            <person name="Robben J."/>
            <person name="van der Schueren J."/>
            <person name="Grymonprez B."/>
            <person name="Chuang Y.-J."/>
            <person name="Vandenbussche F."/>
            <person name="Braeken M."/>
            <person name="Weltjens I."/>
            <person name="Voet M."/>
            <person name="Bastiaens I."/>
            <person name="Aert R."/>
            <person name="Defoor E."/>
            <person name="Weitzenegger T."/>
            <person name="Bothe G."/>
            <person name="Ramsperger U."/>
            <person name="Hilbert H."/>
            <person name="Braun M."/>
            <person name="Holzer E."/>
            <person name="Brandt A."/>
            <person name="Peters S."/>
            <person name="van Staveren M."/>
            <person name="Dirkse W."/>
            <person name="Mooijman P."/>
            <person name="Klein Lankhorst R."/>
            <person name="Rose M."/>
            <person name="Hauf J."/>
            <person name="Koetter P."/>
            <person name="Berneiser S."/>
            <person name="Hempel S."/>
            <person name="Feldpausch M."/>
            <person name="Lamberth S."/>
            <person name="Van den Daele H."/>
            <person name="De Keyser A."/>
            <person name="Buysshaert C."/>
            <person name="Gielen J."/>
            <person name="Villarroel R."/>
            <person name="De Clercq R."/>
            <person name="van Montagu M."/>
            <person name="Rogers J."/>
            <person name="Cronin A."/>
            <person name="Quail M.A."/>
            <person name="Bray-Allen S."/>
            <person name="Clark L."/>
            <person name="Doggett J."/>
            <person name="Hall S."/>
            <person name="Kay M."/>
            <person name="Lennard N."/>
            <person name="McLay K."/>
            <person name="Mayes R."/>
            <person name="Pettett A."/>
            <person name="Rajandream M.A."/>
            <person name="Lyne M."/>
            <person name="Benes V."/>
            <person name="Rechmann S."/>
            <person name="Borkova D."/>
            <person name="Bloecker H."/>
            <person name="Scharfe M."/>
            <person name="Grimm M."/>
            <person name="Loehnert T.-H."/>
            <person name="Dose S."/>
            <person name="de Haan M."/>
            <person name="Maarse A.C."/>
            <person name="Schaefer M."/>
            <person name="Mueller-Auer S."/>
            <person name="Gabel C."/>
            <person name="Fuchs M."/>
            <person name="Fartmann B."/>
            <person name="Granderath K."/>
            <person name="Dauner D."/>
            <person name="Herzl A."/>
            <person name="Neumann S."/>
            <person name="Argiriou A."/>
            <person name="Vitale D."/>
            <person name="Liguori R."/>
            <person name="Piravandi E."/>
            <person name="Massenet O."/>
            <person name="Quigley F."/>
            <person name="Clabauld G."/>
            <person name="Muendlein A."/>
            <person name="Felber R."/>
            <person name="Schnabl S."/>
            <person name="Hiller R."/>
            <person name="Schmidt W."/>
            <person name="Lecharny A."/>
            <person name="Aubourg S."/>
            <person name="Chefdor F."/>
            <person name="Cooke R."/>
            <person name="Berger C."/>
            <person name="Monfort A."/>
            <person name="Casacuberta E."/>
            <person name="Gibbons T."/>
            <person name="Weber N."/>
            <person name="Vandenbol M."/>
            <person name="Bargues M."/>
            <person name="Terol J."/>
            <person name="Torres A."/>
            <person name="Perez-Perez A."/>
            <person name="Purnelle B."/>
            <person name="Bent E."/>
            <person name="Johnson S."/>
            <person name="Tacon D."/>
            <person name="Jesse T."/>
            <person name="Heijnen L."/>
            <person name="Schwarz S."/>
            <person name="Scholler P."/>
            <person name="Heber S."/>
            <person name="Francs P."/>
            <person name="Bielke C."/>
            <person name="Frishman D."/>
            <person name="Haase D."/>
            <person name="Lemcke K."/>
            <person name="Mewes H.-W."/>
            <person name="Stocker S."/>
            <person name="Zaccaria P."/>
            <person name="Bevan M."/>
            <person name="Wilson R.K."/>
            <person name="de la Bastide M."/>
            <person name="Habermann K."/>
            <person name="Parnell L."/>
            <person name="Dedhia N."/>
            <person name="Gnoj L."/>
            <person name="Schutz K."/>
            <person name="Huang E."/>
            <person name="Spiegel L."/>
            <person name="Sekhon M."/>
            <person name="Murray J."/>
            <person name="Sheet P."/>
            <person name="Cordes M."/>
            <person name="Abu-Threideh J."/>
            <person name="Stoneking T."/>
            <person name="Kalicki J."/>
            <person name="Graves T."/>
            <person name="Harmon G."/>
            <person name="Edwards J."/>
            <person name="Latreille P."/>
            <person name="Courtney L."/>
            <person name="Cloud J."/>
            <person name="Abbott A."/>
            <person name="Scott K."/>
            <person name="Johnson D."/>
            <person name="Minx P."/>
            <person name="Bentley D."/>
            <person name="Fulton B."/>
            <person name="Miller N."/>
            <person name="Greco T."/>
            <person name="Kemp K."/>
            <person name="Kramer J."/>
            <person name="Fulton L."/>
            <person name="Mardis E."/>
            <person name="Dante M."/>
            <person name="Pepin K."/>
            <person name="Hillier L.W."/>
            <person name="Nelson J."/>
            <person name="Spieth J."/>
            <person name="Ryan E."/>
            <person name="Andrews S."/>
            <person name="Geisel C."/>
            <person name="Layman D."/>
            <person name="Du H."/>
            <person name="Ali J."/>
            <person name="Berghoff A."/>
            <person name="Jones K."/>
            <person name="Drone K."/>
            <person name="Cotton M."/>
            <person name="Joshu C."/>
            <person name="Antonoiu B."/>
            <person name="Zidanic M."/>
            <person name="Strong C."/>
            <person name="Sun H."/>
            <person name="Lamar B."/>
            <person name="Yordan C."/>
            <person name="Ma P."/>
            <person name="Zhong J."/>
            <person name="Preston R."/>
            <person name="Vil D."/>
            <person name="Shekher M."/>
            <person name="Matero A."/>
            <person name="Shah R."/>
            <person name="Swaby I.K."/>
            <person name="O'Shaughnessy A."/>
            <person name="Rodriguez M."/>
            <person name="Hoffman J."/>
            <person name="Till S."/>
            <person name="Granat S."/>
            <person name="Shohdy N."/>
            <person name="Hasegawa A."/>
            <person name="Hameed A."/>
            <person name="Lodhi M."/>
            <person name="Johnson A."/>
            <person name="Chen E."/>
            <person name="Marra M.A."/>
            <person name="Martienssen R."/>
            <person name="McCombie W.R."/>
        </authorList>
    </citation>
    <scope>NUCLEOTIDE SEQUENCE [LARGE SCALE GENOMIC DNA]</scope>
    <source>
        <strain>cv. Columbia</strain>
    </source>
</reference>
<reference key="3">
    <citation type="journal article" date="2017" name="Plant J.">
        <title>Araport11: a complete reannotation of the Arabidopsis thaliana reference genome.</title>
        <authorList>
            <person name="Cheng C.Y."/>
            <person name="Krishnakumar V."/>
            <person name="Chan A.P."/>
            <person name="Thibaud-Nissen F."/>
            <person name="Schobel S."/>
            <person name="Town C.D."/>
        </authorList>
    </citation>
    <scope>GENOME REANNOTATION</scope>
    <source>
        <strain>cv. Columbia</strain>
    </source>
</reference>
<reference key="4">
    <citation type="journal article" date="2003" name="Science">
        <title>Empirical analysis of transcriptional activity in the Arabidopsis genome.</title>
        <authorList>
            <person name="Yamada K."/>
            <person name="Lim J."/>
            <person name="Dale J.M."/>
            <person name="Chen H."/>
            <person name="Shinn P."/>
            <person name="Palm C.J."/>
            <person name="Southwick A.M."/>
            <person name="Wu H.C."/>
            <person name="Kim C.J."/>
            <person name="Nguyen M."/>
            <person name="Pham P.K."/>
            <person name="Cheuk R.F."/>
            <person name="Karlin-Newmann G."/>
            <person name="Liu S.X."/>
            <person name="Lam B."/>
            <person name="Sakano H."/>
            <person name="Wu T."/>
            <person name="Yu G."/>
            <person name="Miranda M."/>
            <person name="Quach H.L."/>
            <person name="Tripp M."/>
            <person name="Chang C.H."/>
            <person name="Lee J.M."/>
            <person name="Toriumi M.J."/>
            <person name="Chan M.M."/>
            <person name="Tang C.C."/>
            <person name="Onodera C.S."/>
            <person name="Deng J.M."/>
            <person name="Akiyama K."/>
            <person name="Ansari Y."/>
            <person name="Arakawa T."/>
            <person name="Banh J."/>
            <person name="Banno F."/>
            <person name="Bowser L."/>
            <person name="Brooks S.Y."/>
            <person name="Carninci P."/>
            <person name="Chao Q."/>
            <person name="Choy N."/>
            <person name="Enju A."/>
            <person name="Goldsmith A.D."/>
            <person name="Gurjal M."/>
            <person name="Hansen N.F."/>
            <person name="Hayashizaki Y."/>
            <person name="Johnson-Hopson C."/>
            <person name="Hsuan V.W."/>
            <person name="Iida K."/>
            <person name="Karnes M."/>
            <person name="Khan S."/>
            <person name="Koesema E."/>
            <person name="Ishida J."/>
            <person name="Jiang P.X."/>
            <person name="Jones T."/>
            <person name="Kawai J."/>
            <person name="Kamiya A."/>
            <person name="Meyers C."/>
            <person name="Nakajima M."/>
            <person name="Narusaka M."/>
            <person name="Seki M."/>
            <person name="Sakurai T."/>
            <person name="Satou M."/>
            <person name="Tamse R."/>
            <person name="Vaysberg M."/>
            <person name="Wallender E.K."/>
            <person name="Wong C."/>
            <person name="Yamamura Y."/>
            <person name="Yuan S."/>
            <person name="Shinozaki K."/>
            <person name="Davis R.W."/>
            <person name="Theologis A."/>
            <person name="Ecker J.R."/>
        </authorList>
    </citation>
    <scope>NUCLEOTIDE SEQUENCE [LARGE SCALE MRNA]</scope>
    <source>
        <strain>cv. Columbia</strain>
    </source>
</reference>
<reference key="5">
    <citation type="submission" date="2006-07" db="EMBL/GenBank/DDBJ databases">
        <title>Large-scale analysis of RIKEN Arabidopsis full-length (RAFL) cDNAs.</title>
        <authorList>
            <person name="Totoki Y."/>
            <person name="Seki M."/>
            <person name="Ishida J."/>
            <person name="Nakajima M."/>
            <person name="Enju A."/>
            <person name="Kamiya A."/>
            <person name="Narusaka M."/>
            <person name="Shin-i T."/>
            <person name="Nakagawa M."/>
            <person name="Sakamoto N."/>
            <person name="Oishi K."/>
            <person name="Kohara Y."/>
            <person name="Kobayashi M."/>
            <person name="Toyoda A."/>
            <person name="Sakaki Y."/>
            <person name="Sakurai T."/>
            <person name="Iida K."/>
            <person name="Akiyama K."/>
            <person name="Satou M."/>
            <person name="Toyoda T."/>
            <person name="Konagaya A."/>
            <person name="Carninci P."/>
            <person name="Kawai J."/>
            <person name="Hayashizaki Y."/>
            <person name="Shinozaki K."/>
        </authorList>
    </citation>
    <scope>NUCLEOTIDE SEQUENCE [LARGE SCALE MRNA]</scope>
    <source>
        <strain>cv. Columbia</strain>
    </source>
</reference>
<reference key="6">
    <citation type="journal article" date="2003" name="Plant Physiol.">
        <title>Analysis of the small GTPase gene superfamily of Arabidopsis.</title>
        <authorList>
            <person name="Vernoud V."/>
            <person name="Horton A.C."/>
            <person name="Yang Z."/>
            <person name="Nielsen E."/>
        </authorList>
    </citation>
    <scope>GENE FAMILY</scope>
    <scope>NOMENCLATURE</scope>
</reference>
<reference key="7">
    <citation type="journal article" date="2004" name="Mol. Cell. Proteomics">
        <title>Identification of new intrinsic proteins in Arabidopsis plasma membrane proteome.</title>
        <authorList>
            <person name="Marmagne A."/>
            <person name="Rouet M.-A."/>
            <person name="Ferro M."/>
            <person name="Rolland N."/>
            <person name="Alcon C."/>
            <person name="Joyard J."/>
            <person name="Garin J."/>
            <person name="Barbier-Brygoo H."/>
            <person name="Ephritikhine G."/>
        </authorList>
    </citation>
    <scope>IDENTIFICATION BY MASS SPECTROMETRY</scope>
    <scope>SUBCELLULAR LOCATION [LARGE SCALE ANALYSIS]</scope>
</reference>